<gene>
    <name evidence="1" type="primary">uvrB</name>
    <name type="ordered locus">CLI_3571</name>
</gene>
<organism>
    <name type="scientific">Clostridium botulinum (strain Langeland / NCTC 10281 / Type F)</name>
    <dbReference type="NCBI Taxonomy" id="441772"/>
    <lineage>
        <taxon>Bacteria</taxon>
        <taxon>Bacillati</taxon>
        <taxon>Bacillota</taxon>
        <taxon>Clostridia</taxon>
        <taxon>Eubacteriales</taxon>
        <taxon>Clostridiaceae</taxon>
        <taxon>Clostridium</taxon>
    </lineage>
</organism>
<keyword id="KW-0067">ATP-binding</keyword>
<keyword id="KW-0963">Cytoplasm</keyword>
<keyword id="KW-0227">DNA damage</keyword>
<keyword id="KW-0228">DNA excision</keyword>
<keyword id="KW-0234">DNA repair</keyword>
<keyword id="KW-0267">Excision nuclease</keyword>
<keyword id="KW-0347">Helicase</keyword>
<keyword id="KW-0378">Hydrolase</keyword>
<keyword id="KW-0547">Nucleotide-binding</keyword>
<keyword id="KW-0742">SOS response</keyword>
<reference key="1">
    <citation type="submission" date="2007-06" db="EMBL/GenBank/DDBJ databases">
        <authorList>
            <person name="Brinkac L.M."/>
            <person name="Daugherty S."/>
            <person name="Dodson R.J."/>
            <person name="Madupu R."/>
            <person name="Brown J.L."/>
            <person name="Bruce D."/>
            <person name="Detter C."/>
            <person name="Munk C."/>
            <person name="Smith L.A."/>
            <person name="Smith T.J."/>
            <person name="White O."/>
            <person name="Brettin T.S."/>
        </authorList>
    </citation>
    <scope>NUCLEOTIDE SEQUENCE [LARGE SCALE GENOMIC DNA]</scope>
    <source>
        <strain>Langeland / NCTC 10281 / Type F</strain>
    </source>
</reference>
<proteinExistence type="inferred from homology"/>
<protein>
    <recommendedName>
        <fullName evidence="1">UvrABC system protein B</fullName>
        <shortName evidence="1">Protein UvrB</shortName>
    </recommendedName>
    <alternativeName>
        <fullName evidence="1">Excinuclease ABC subunit B</fullName>
    </alternativeName>
</protein>
<dbReference type="EMBL" id="CP000728">
    <property type="protein sequence ID" value="ABS39367.1"/>
    <property type="molecule type" value="Genomic_DNA"/>
</dbReference>
<dbReference type="RefSeq" id="WP_003357634.1">
    <property type="nucleotide sequence ID" value="NC_009699.1"/>
</dbReference>
<dbReference type="SMR" id="A7GIY3"/>
<dbReference type="GeneID" id="5186200"/>
<dbReference type="KEGG" id="cbf:CLI_3571"/>
<dbReference type="HOGENOM" id="CLU_009621_2_1_9"/>
<dbReference type="Proteomes" id="UP000002410">
    <property type="component" value="Chromosome"/>
</dbReference>
<dbReference type="GO" id="GO:0005737">
    <property type="term" value="C:cytoplasm"/>
    <property type="evidence" value="ECO:0007669"/>
    <property type="project" value="UniProtKB-SubCell"/>
</dbReference>
<dbReference type="GO" id="GO:0009380">
    <property type="term" value="C:excinuclease repair complex"/>
    <property type="evidence" value="ECO:0007669"/>
    <property type="project" value="InterPro"/>
</dbReference>
<dbReference type="GO" id="GO:0005524">
    <property type="term" value="F:ATP binding"/>
    <property type="evidence" value="ECO:0007669"/>
    <property type="project" value="UniProtKB-UniRule"/>
</dbReference>
<dbReference type="GO" id="GO:0016887">
    <property type="term" value="F:ATP hydrolysis activity"/>
    <property type="evidence" value="ECO:0007669"/>
    <property type="project" value="InterPro"/>
</dbReference>
<dbReference type="GO" id="GO:0003677">
    <property type="term" value="F:DNA binding"/>
    <property type="evidence" value="ECO:0007669"/>
    <property type="project" value="UniProtKB-UniRule"/>
</dbReference>
<dbReference type="GO" id="GO:0009381">
    <property type="term" value="F:excinuclease ABC activity"/>
    <property type="evidence" value="ECO:0007669"/>
    <property type="project" value="UniProtKB-UniRule"/>
</dbReference>
<dbReference type="GO" id="GO:0004386">
    <property type="term" value="F:helicase activity"/>
    <property type="evidence" value="ECO:0007669"/>
    <property type="project" value="UniProtKB-KW"/>
</dbReference>
<dbReference type="GO" id="GO:0006289">
    <property type="term" value="P:nucleotide-excision repair"/>
    <property type="evidence" value="ECO:0007669"/>
    <property type="project" value="UniProtKB-UniRule"/>
</dbReference>
<dbReference type="GO" id="GO:0009432">
    <property type="term" value="P:SOS response"/>
    <property type="evidence" value="ECO:0007669"/>
    <property type="project" value="UniProtKB-UniRule"/>
</dbReference>
<dbReference type="CDD" id="cd17916">
    <property type="entry name" value="DEXHc_UvrB"/>
    <property type="match status" value="1"/>
</dbReference>
<dbReference type="CDD" id="cd18790">
    <property type="entry name" value="SF2_C_UvrB"/>
    <property type="match status" value="1"/>
</dbReference>
<dbReference type="Gene3D" id="3.40.50.300">
    <property type="entry name" value="P-loop containing nucleotide triphosphate hydrolases"/>
    <property type="match status" value="3"/>
</dbReference>
<dbReference type="Gene3D" id="4.10.860.10">
    <property type="entry name" value="UVR domain"/>
    <property type="match status" value="1"/>
</dbReference>
<dbReference type="HAMAP" id="MF_00204">
    <property type="entry name" value="UvrB"/>
    <property type="match status" value="1"/>
</dbReference>
<dbReference type="InterPro" id="IPR006935">
    <property type="entry name" value="Helicase/UvrB_N"/>
</dbReference>
<dbReference type="InterPro" id="IPR014001">
    <property type="entry name" value="Helicase_ATP-bd"/>
</dbReference>
<dbReference type="InterPro" id="IPR001650">
    <property type="entry name" value="Helicase_C-like"/>
</dbReference>
<dbReference type="InterPro" id="IPR027417">
    <property type="entry name" value="P-loop_NTPase"/>
</dbReference>
<dbReference type="InterPro" id="IPR001943">
    <property type="entry name" value="UVR_dom"/>
</dbReference>
<dbReference type="InterPro" id="IPR036876">
    <property type="entry name" value="UVR_dom_sf"/>
</dbReference>
<dbReference type="InterPro" id="IPR004807">
    <property type="entry name" value="UvrB"/>
</dbReference>
<dbReference type="InterPro" id="IPR041471">
    <property type="entry name" value="UvrB_inter"/>
</dbReference>
<dbReference type="InterPro" id="IPR024759">
    <property type="entry name" value="UvrB_YAD/RRR_dom"/>
</dbReference>
<dbReference type="NCBIfam" id="NF003673">
    <property type="entry name" value="PRK05298.1"/>
    <property type="match status" value="1"/>
</dbReference>
<dbReference type="NCBIfam" id="TIGR00631">
    <property type="entry name" value="uvrb"/>
    <property type="match status" value="1"/>
</dbReference>
<dbReference type="PANTHER" id="PTHR24029">
    <property type="entry name" value="UVRABC SYSTEM PROTEIN B"/>
    <property type="match status" value="1"/>
</dbReference>
<dbReference type="PANTHER" id="PTHR24029:SF0">
    <property type="entry name" value="UVRABC SYSTEM PROTEIN B"/>
    <property type="match status" value="1"/>
</dbReference>
<dbReference type="Pfam" id="PF00271">
    <property type="entry name" value="Helicase_C"/>
    <property type="match status" value="1"/>
</dbReference>
<dbReference type="Pfam" id="PF04851">
    <property type="entry name" value="ResIII"/>
    <property type="match status" value="1"/>
</dbReference>
<dbReference type="Pfam" id="PF02151">
    <property type="entry name" value="UVR"/>
    <property type="match status" value="1"/>
</dbReference>
<dbReference type="Pfam" id="PF12344">
    <property type="entry name" value="UvrB"/>
    <property type="match status" value="1"/>
</dbReference>
<dbReference type="Pfam" id="PF17757">
    <property type="entry name" value="UvrB_inter"/>
    <property type="match status" value="1"/>
</dbReference>
<dbReference type="SMART" id="SM00487">
    <property type="entry name" value="DEXDc"/>
    <property type="match status" value="1"/>
</dbReference>
<dbReference type="SMART" id="SM00490">
    <property type="entry name" value="HELICc"/>
    <property type="match status" value="1"/>
</dbReference>
<dbReference type="SUPFAM" id="SSF46600">
    <property type="entry name" value="C-terminal UvrC-binding domain of UvrB"/>
    <property type="match status" value="1"/>
</dbReference>
<dbReference type="SUPFAM" id="SSF52540">
    <property type="entry name" value="P-loop containing nucleoside triphosphate hydrolases"/>
    <property type="match status" value="2"/>
</dbReference>
<dbReference type="PROSITE" id="PS51192">
    <property type="entry name" value="HELICASE_ATP_BIND_1"/>
    <property type="match status" value="1"/>
</dbReference>
<dbReference type="PROSITE" id="PS51194">
    <property type="entry name" value="HELICASE_CTER"/>
    <property type="match status" value="1"/>
</dbReference>
<dbReference type="PROSITE" id="PS50151">
    <property type="entry name" value="UVR"/>
    <property type="match status" value="1"/>
</dbReference>
<accession>A7GIY3</accession>
<name>UVRB_CLOBL</name>
<evidence type="ECO:0000255" key="1">
    <source>
        <dbReference type="HAMAP-Rule" id="MF_00204"/>
    </source>
</evidence>
<feature type="chain" id="PRO_1000077878" description="UvrABC system protein B">
    <location>
        <begin position="1"/>
        <end position="662"/>
    </location>
</feature>
<feature type="domain" description="Helicase ATP-binding" evidence="1">
    <location>
        <begin position="25"/>
        <end position="182"/>
    </location>
</feature>
<feature type="domain" description="Helicase C-terminal" evidence="1">
    <location>
        <begin position="429"/>
        <end position="595"/>
    </location>
</feature>
<feature type="domain" description="UVR" evidence="1">
    <location>
        <begin position="622"/>
        <end position="657"/>
    </location>
</feature>
<feature type="short sequence motif" description="Beta-hairpin">
    <location>
        <begin position="91"/>
        <end position="114"/>
    </location>
</feature>
<feature type="binding site" evidence="1">
    <location>
        <begin position="38"/>
        <end position="45"/>
    </location>
    <ligand>
        <name>ATP</name>
        <dbReference type="ChEBI" id="CHEBI:30616"/>
    </ligand>
</feature>
<comment type="function">
    <text evidence="1">The UvrABC repair system catalyzes the recognition and processing of DNA lesions. A damage recognition complex composed of 2 UvrA and 2 UvrB subunits scans DNA for abnormalities. Upon binding of the UvrA(2)B(2) complex to a putative damaged site, the DNA wraps around one UvrB monomer. DNA wrap is dependent on ATP binding by UvrB and probably causes local melting of the DNA helix, facilitating insertion of UvrB beta-hairpin between the DNA strands. Then UvrB probes one DNA strand for the presence of a lesion. If a lesion is found the UvrA subunits dissociate and the UvrB-DNA preincision complex is formed. This complex is subsequently bound by UvrC and the second UvrB is released. If no lesion is found, the DNA wraps around the other UvrB subunit that will check the other stand for damage.</text>
</comment>
<comment type="subunit">
    <text evidence="1">Forms a heterotetramer with UvrA during the search for lesions. Interacts with UvrC in an incision complex.</text>
</comment>
<comment type="subcellular location">
    <subcellularLocation>
        <location evidence="1">Cytoplasm</location>
    </subcellularLocation>
</comment>
<comment type="domain">
    <text evidence="1">The beta-hairpin motif is involved in DNA binding.</text>
</comment>
<comment type="similarity">
    <text evidence="1">Belongs to the UvrB family.</text>
</comment>
<sequence>MNQFKVISKFNPTGDQPKAIKSIAKGIEKREKFQTLIGVTGSGKTFTMANIIEKVQKPTLVLAHNKTLAAQLCSEFREFFPNNAVEYFVSYYDYYQPEAYVAQSDTYIEKDASINDEIDKLRHSATSALFERKDVIIVASVSCIYGLGNPEEYKKLTISLREGMEKDRDEIIKKLVEIQYERNDIDFSRGTFRVKGDVLDIFPASSSSKAVRVEFFGDEIDRIKEFDVLTGETITKLKHISIFPASHFATSKDRLEVAIKDIEEELEERVKELVSQDKILEAQRLKQRTNFDIEMMREVGYCTGIENYSRVLDGRAKGTPPQTLLDYFPQDFLLFIDESHVTLPQVKAMQAGDKSRKDSLVEYGFRLPCAYDNRPLTFKEFENKLNQVVFVSATPAKYELEYSTNTAEQVIRPTGLLDPEIIVKPVKGQIDDLYTSIQETIKRGFRILVTTLTKKMAEDLTDYLKEMGVKTRYLHSDIDTIERMKIIHDLRKGEFHVLVGINLLREGLDIPEVALVTILDADKEGFLRSETSLIQTVGRAARNSESKVIMYGDVITKSMEKTIKETNRRRKIQMEYNEEHGIVPKTIIKDIREVIQISDIAEERKEYDNLNEALKSYNNDIDKLIEKYEEEMKEAAQNLQFEKAAHLRDVIYKLKKDKETEL</sequence>